<name>UXAC_KLEP3</name>
<dbReference type="EC" id="5.3.1.12" evidence="1"/>
<dbReference type="EMBL" id="CP000964">
    <property type="protein sequence ID" value="ACI10036.1"/>
    <property type="molecule type" value="Genomic_DNA"/>
</dbReference>
<dbReference type="SMR" id="B5XTW7"/>
<dbReference type="KEGG" id="kpe:KPK_0591"/>
<dbReference type="HOGENOM" id="CLU_044465_1_0_6"/>
<dbReference type="UniPathway" id="UPA00246"/>
<dbReference type="Proteomes" id="UP000001734">
    <property type="component" value="Chromosome"/>
</dbReference>
<dbReference type="GO" id="GO:0008880">
    <property type="term" value="F:glucuronate isomerase activity"/>
    <property type="evidence" value="ECO:0007669"/>
    <property type="project" value="UniProtKB-UniRule"/>
</dbReference>
<dbReference type="GO" id="GO:0019698">
    <property type="term" value="P:D-galacturonate catabolic process"/>
    <property type="evidence" value="ECO:0007669"/>
    <property type="project" value="TreeGrafter"/>
</dbReference>
<dbReference type="GO" id="GO:0042840">
    <property type="term" value="P:D-glucuronate catabolic process"/>
    <property type="evidence" value="ECO:0007669"/>
    <property type="project" value="TreeGrafter"/>
</dbReference>
<dbReference type="FunFam" id="1.10.2020.10:FF:000001">
    <property type="entry name" value="Uronate isomerase"/>
    <property type="match status" value="1"/>
</dbReference>
<dbReference type="Gene3D" id="3.20.20.140">
    <property type="entry name" value="Metal-dependent hydrolases"/>
    <property type="match status" value="1"/>
</dbReference>
<dbReference type="Gene3D" id="1.10.2020.10">
    <property type="entry name" value="uronate isomerase, domain 2, chain A"/>
    <property type="match status" value="1"/>
</dbReference>
<dbReference type="HAMAP" id="MF_00675">
    <property type="entry name" value="UxaC"/>
    <property type="match status" value="1"/>
</dbReference>
<dbReference type="InterPro" id="IPR032466">
    <property type="entry name" value="Metal_Hydrolase"/>
</dbReference>
<dbReference type="InterPro" id="IPR003766">
    <property type="entry name" value="Uronate_isomerase"/>
</dbReference>
<dbReference type="NCBIfam" id="NF002794">
    <property type="entry name" value="PRK02925.1"/>
    <property type="match status" value="1"/>
</dbReference>
<dbReference type="PANTHER" id="PTHR30068">
    <property type="entry name" value="URONATE ISOMERASE"/>
    <property type="match status" value="1"/>
</dbReference>
<dbReference type="PANTHER" id="PTHR30068:SF4">
    <property type="entry name" value="URONATE ISOMERASE"/>
    <property type="match status" value="1"/>
</dbReference>
<dbReference type="Pfam" id="PF02614">
    <property type="entry name" value="UxaC"/>
    <property type="match status" value="1"/>
</dbReference>
<dbReference type="SUPFAM" id="SSF51556">
    <property type="entry name" value="Metallo-dependent hydrolases"/>
    <property type="match status" value="1"/>
</dbReference>
<reference key="1">
    <citation type="journal article" date="2008" name="PLoS Genet.">
        <title>Complete genome sequence of the N2-fixing broad host range endophyte Klebsiella pneumoniae 342 and virulence predictions verified in mice.</title>
        <authorList>
            <person name="Fouts D.E."/>
            <person name="Tyler H.L."/>
            <person name="DeBoy R.T."/>
            <person name="Daugherty S."/>
            <person name="Ren Q."/>
            <person name="Badger J.H."/>
            <person name="Durkin A.S."/>
            <person name="Huot H."/>
            <person name="Shrivastava S."/>
            <person name="Kothari S."/>
            <person name="Dodson R.J."/>
            <person name="Mohamoud Y."/>
            <person name="Khouri H."/>
            <person name="Roesch L.F.W."/>
            <person name="Krogfelt K.A."/>
            <person name="Struve C."/>
            <person name="Triplett E.W."/>
            <person name="Methe B.A."/>
        </authorList>
    </citation>
    <scope>NUCLEOTIDE SEQUENCE [LARGE SCALE GENOMIC DNA]</scope>
    <source>
        <strain>342</strain>
    </source>
</reference>
<proteinExistence type="inferred from homology"/>
<protein>
    <recommendedName>
        <fullName evidence="1">Uronate isomerase</fullName>
        <ecNumber evidence="1">5.3.1.12</ecNumber>
    </recommendedName>
    <alternativeName>
        <fullName evidence="1">Glucuronate isomerase</fullName>
    </alternativeName>
    <alternativeName>
        <fullName evidence="1">Uronic isomerase</fullName>
    </alternativeName>
</protein>
<accession>B5XTW7</accession>
<organism>
    <name type="scientific">Klebsiella pneumoniae (strain 342)</name>
    <dbReference type="NCBI Taxonomy" id="507522"/>
    <lineage>
        <taxon>Bacteria</taxon>
        <taxon>Pseudomonadati</taxon>
        <taxon>Pseudomonadota</taxon>
        <taxon>Gammaproteobacteria</taxon>
        <taxon>Enterobacterales</taxon>
        <taxon>Enterobacteriaceae</taxon>
        <taxon>Klebsiella/Raoultella group</taxon>
        <taxon>Klebsiella</taxon>
        <taxon>Klebsiella pneumoniae complex</taxon>
    </lineage>
</organism>
<feature type="chain" id="PRO_1000131597" description="Uronate isomerase">
    <location>
        <begin position="1"/>
        <end position="470"/>
    </location>
</feature>
<comment type="catalytic activity">
    <reaction evidence="1">
        <text>D-glucuronate = D-fructuronate</text>
        <dbReference type="Rhea" id="RHEA:13049"/>
        <dbReference type="ChEBI" id="CHEBI:58720"/>
        <dbReference type="ChEBI" id="CHEBI:59863"/>
        <dbReference type="EC" id="5.3.1.12"/>
    </reaction>
</comment>
<comment type="catalytic activity">
    <reaction evidence="1">
        <text>aldehydo-D-galacturonate = keto-D-tagaturonate</text>
        <dbReference type="Rhea" id="RHEA:27702"/>
        <dbReference type="ChEBI" id="CHEBI:12952"/>
        <dbReference type="ChEBI" id="CHEBI:17886"/>
        <dbReference type="EC" id="5.3.1.12"/>
    </reaction>
</comment>
<comment type="pathway">
    <text evidence="1">Carbohydrate metabolism; pentose and glucuronate interconversion.</text>
</comment>
<comment type="similarity">
    <text evidence="1">Belongs to the metallo-dependent hydrolases superfamily. Uronate isomerase family.</text>
</comment>
<gene>
    <name evidence="1" type="primary">uxaC</name>
    <name type="ordered locus">KPK_0591</name>
</gene>
<evidence type="ECO:0000255" key="1">
    <source>
        <dbReference type="HAMAP-Rule" id="MF_00675"/>
    </source>
</evidence>
<sequence>MTPFMTEDFLLDTEFARRLYHDYAKDQPIFDYHCHLPPQQVAENYRFKNLYDIWLKGDHYKWRAMRTNGVPERLCTGDASDREKFDAWAATVPHTIGNPLYHWTHLELRRPFGITGKLLSPSTADEIWDQCNDLLAQDAFSARGIMKQMNVKMVGTTDDPIDSLEHHAVVAKDTSFDIKVLPSWRPDKAFNIEQATFNDYMAKLGEVSDTDIRRFADLQSALTKRLDHFAAHGCKVSDHALDVVLFAEATDAELDAILARRLAGETLSAHEVAQFKTAVLVFLGAEYARRGWVQQYHIGALRNNNLRQFKLLGPDVGFDSINDRPMAEELSKLLSKQNEENLLPKTILYCLNPRDNEVLGTMIGNFQGEGMPGKMQFGSGWWFNDQKDGMERQMTQLAQLGLLSRFVGMLTDSRSFLSYTRHEYFRRILCQMIGRWVAAGEAPADIALLGEMVKNICFNNARDYFAIELN</sequence>
<keyword id="KW-0413">Isomerase</keyword>